<evidence type="ECO:0000250" key="1">
    <source>
        <dbReference type="UniProtKB" id="P32378"/>
    </source>
</evidence>
<evidence type="ECO:0000255" key="2"/>
<evidence type="ECO:0000269" key="3">
    <source>
    </source>
</evidence>
<evidence type="ECO:0000303" key="4">
    <source>
    </source>
</evidence>
<evidence type="ECO:0000305" key="5"/>
<feature type="chain" id="PRO_0000461047" description="Polyprenyl transferase esdpC">
    <location>
        <begin position="1"/>
        <end position="327"/>
    </location>
</feature>
<feature type="transmembrane region" description="Helical" evidence="2">
    <location>
        <begin position="35"/>
        <end position="54"/>
    </location>
</feature>
<feature type="transmembrane region" description="Helical" evidence="2">
    <location>
        <begin position="73"/>
        <end position="93"/>
    </location>
</feature>
<feature type="transmembrane region" description="Helical" evidence="2">
    <location>
        <begin position="118"/>
        <end position="138"/>
    </location>
</feature>
<feature type="transmembrane region" description="Helical" evidence="2">
    <location>
        <begin position="140"/>
        <end position="160"/>
    </location>
</feature>
<feature type="transmembrane region" description="Helical" evidence="2">
    <location>
        <begin position="171"/>
        <end position="191"/>
    </location>
</feature>
<feature type="transmembrane region" description="Helical" evidence="2">
    <location>
        <begin position="202"/>
        <end position="222"/>
    </location>
</feature>
<feature type="transmembrane region" description="Helical" evidence="2">
    <location>
        <begin position="239"/>
        <end position="259"/>
    </location>
</feature>
<feature type="transmembrane region" description="Helical" evidence="2">
    <location>
        <begin position="307"/>
        <end position="327"/>
    </location>
</feature>
<sequence length="327" mass="36589">MAKASLDTLPRSVPQKRTAGDLAKDLFVLSRFNRYNPLLATFSGVWATLLAGASKRIDHPGSISTEYVFKQALLVFVGGYIFCGAGMVWNDWIDLNIDKQVARTKERPLAAGRITNTEALIWMMAQYIASWYLIAYTLDGHNVLEAMIPVTISTILYPFGKRSFFKTIYFYPQYFLGFTLGYPSVIGWLAIKGQDQSLQDNIMESFALGTTVFTWVLYLNTAYSYQDIEGDKKANVNSVYFLAGSYIHYFLVFLAALVLGATSLQLKAQASQWLWGSWLSVWGYSFASQLSRFSAKDPSSGGTLHKENFALGVWTVFACAVELLLKS</sequence>
<accession>A0A8D5M7V9</accession>
<proteinExistence type="evidence at protein level"/>
<name>ESDPC_PENSH</name>
<comment type="function">
    <text evidence="3">olyprenyl transferase; part of the cluster that mediates the biosynthesis of shearones, diterpenoid pyrones (DPs) which are structurally diverse meroterpenoids consisting of a diterpene linked by a pyrone, and which may exhibit a range of bioactivities (PubMed:35057611). Within the pathway, esdpC takes part to the biosynthesis of the molecular scaffold by catalyzing the C-3 geranylgeranylation reaction of the alpha-pyrone produced by esdpA (PubMed:35057611). The molecular scaffold is commonly biosynthesized by a series of enzymes including the non-reducing polyketide synthase (NR-PKS) esdpA that generates an alpha-pyrone; the prenyltransferase esdpC that attaches a geranylgeranyl pyrophosphate (GGPP) produced by the GGPP synthase (GGPPS) esdpD onto the pyrone unit; the FAD-dependent monooxygenase esdpE that converts an olefin on the diterpene unit into an epoxide; and the terpene cyclase esdpB that catalyzes the cyclization reactions to give the molecular backbone shearone A (PubMed:35057611). In the modification steps, esdpF oxidizes the hydroxy group to a ketone at C-3 and esdpG then attaches hydroxy groups at both C-11 and C-12. After that, esdpI hydroxylates at C-20 and esdpH hydroxylates at C-6'. The ether bridge is generated by nucleophilic attack of the hydroxy group at C-20 to the carbonyl carbon at C-3. EsdpH can also functions prior to esdpI. The different combinations of these modification enzymes lead to the production of diverse shearone derivatives, shearone I being the end product of the pathway (PubMed:35057611). The alpha-ketoglutarate-dependent dioxygenase esdpJ seems not to be involved in this pathway (PubMed:35057611).</text>
</comment>
<comment type="cofactor">
    <cofactor evidence="1">
        <name>Mg(2+)</name>
        <dbReference type="ChEBI" id="CHEBI:18420"/>
    </cofactor>
</comment>
<comment type="pathway">
    <text evidence="3">Secondary metabolite biosynthesis; terpenoid biosynthesis.</text>
</comment>
<comment type="subcellular location">
    <subcellularLocation>
        <location evidence="2">Membrane</location>
        <topology evidence="2">Multi-pass membrane protein</topology>
    </subcellularLocation>
</comment>
<comment type="biotechnology">
    <text evidence="3">Shearone derivatives produced by this cluster are interesting candidates for Alzheimer's disease (AD) therapy since they moderately inhibit aggregation of amyloid beta 42 (Abeta42).</text>
</comment>
<comment type="similarity">
    <text evidence="5">Belongs to the UbiA prenyltransferase family.</text>
</comment>
<keyword id="KW-0472">Membrane</keyword>
<keyword id="KW-0808">Transferase</keyword>
<keyword id="KW-0812">Transmembrane</keyword>
<keyword id="KW-1133">Transmembrane helix</keyword>
<reference key="1">
    <citation type="journal article" date="2022" name="J. Nat. Prod.">
        <title>Synthetic biology-based discovery of diterpenoid pyrones from the genome of Eupenicillium shearii.</title>
        <authorList>
            <person name="Morishita Y."/>
            <person name="Tsukada K."/>
            <person name="Murakami K."/>
            <person name="Irie K."/>
            <person name="Asai T."/>
        </authorList>
    </citation>
    <scope>NUCLEOTIDE SEQUENCE [GENOMIC DNA]</scope>
    <scope>FUNCTION</scope>
    <scope>CATALYTIC ACTIVITY</scope>
    <scope>PATHWAY</scope>
    <scope>BIOTECHNOLOGY</scope>
    <source>
        <strain>IFM 42152</strain>
    </source>
</reference>
<protein>
    <recommendedName>
        <fullName evidence="4">Polyprenyl transferase esdpC</fullName>
        <ecNumber evidence="3">2.5.1.-</ecNumber>
    </recommendedName>
    <alternativeName>
        <fullName evidence="4">Shearone I biosynthesis cluster protein C</fullName>
    </alternativeName>
</protein>
<dbReference type="EC" id="2.5.1.-" evidence="3"/>
<dbReference type="EMBL" id="LC600199">
    <property type="protein sequence ID" value="BCP96885.1"/>
    <property type="molecule type" value="Genomic_DNA"/>
</dbReference>
<dbReference type="SMR" id="A0A8D5M7V9"/>
<dbReference type="UniPathway" id="UPA00213"/>
<dbReference type="GO" id="GO:0005886">
    <property type="term" value="C:plasma membrane"/>
    <property type="evidence" value="ECO:0007669"/>
    <property type="project" value="TreeGrafter"/>
</dbReference>
<dbReference type="GO" id="GO:0016765">
    <property type="term" value="F:transferase activity, transferring alkyl or aryl (other than methyl) groups"/>
    <property type="evidence" value="ECO:0007669"/>
    <property type="project" value="InterPro"/>
</dbReference>
<dbReference type="GO" id="GO:0016114">
    <property type="term" value="P:terpenoid biosynthetic process"/>
    <property type="evidence" value="ECO:0007669"/>
    <property type="project" value="UniProtKB-UniPathway"/>
</dbReference>
<dbReference type="CDD" id="cd13959">
    <property type="entry name" value="PT_UbiA_COQ2"/>
    <property type="match status" value="1"/>
</dbReference>
<dbReference type="FunFam" id="1.10.357.140:FF:000008">
    <property type="entry name" value="4-hydroxybenzoate octaprenyltransferase"/>
    <property type="match status" value="1"/>
</dbReference>
<dbReference type="Gene3D" id="1.10.357.140">
    <property type="entry name" value="UbiA prenyltransferase"/>
    <property type="match status" value="1"/>
</dbReference>
<dbReference type="Gene3D" id="1.20.120.1780">
    <property type="entry name" value="UbiA prenyltransferase"/>
    <property type="match status" value="1"/>
</dbReference>
<dbReference type="InterPro" id="IPR039653">
    <property type="entry name" value="Prenyltransferase"/>
</dbReference>
<dbReference type="InterPro" id="IPR000537">
    <property type="entry name" value="UbiA_prenyltransferase"/>
</dbReference>
<dbReference type="InterPro" id="IPR030470">
    <property type="entry name" value="UbiA_prenylTrfase_CS"/>
</dbReference>
<dbReference type="InterPro" id="IPR044878">
    <property type="entry name" value="UbiA_sf"/>
</dbReference>
<dbReference type="PANTHER" id="PTHR11048:SF28">
    <property type="entry name" value="4-HYDROXYBENZOATE POLYPRENYLTRANSFERASE, MITOCHONDRIAL"/>
    <property type="match status" value="1"/>
</dbReference>
<dbReference type="PANTHER" id="PTHR11048">
    <property type="entry name" value="PRENYLTRANSFERASES"/>
    <property type="match status" value="1"/>
</dbReference>
<dbReference type="Pfam" id="PF01040">
    <property type="entry name" value="UbiA"/>
    <property type="match status" value="1"/>
</dbReference>
<dbReference type="PROSITE" id="PS00943">
    <property type="entry name" value="UBIA"/>
    <property type="match status" value="1"/>
</dbReference>
<gene>
    <name evidence="4" type="primary">esdpC</name>
</gene>
<organism>
    <name type="scientific">Penicillium shearii</name>
    <name type="common">Eupenicillium shearii</name>
    <dbReference type="NCBI Taxonomy" id="904690"/>
    <lineage>
        <taxon>Eukaryota</taxon>
        <taxon>Fungi</taxon>
        <taxon>Dikarya</taxon>
        <taxon>Ascomycota</taxon>
        <taxon>Pezizomycotina</taxon>
        <taxon>Eurotiomycetes</taxon>
        <taxon>Eurotiomycetidae</taxon>
        <taxon>Eurotiales</taxon>
        <taxon>Aspergillaceae</taxon>
        <taxon>Penicillium</taxon>
    </lineage>
</organism>